<gene>
    <name evidence="1" type="primary">aroC</name>
    <name type="ordered locus">cgR_1672</name>
</gene>
<sequence length="407" mass="43429">MLRWTTAGESHGQALIATVEHMPAGVPVTKDEVSYQLARRRLGYGRGARMKFEQDALTFLTGIRHGLTLGSPISIMIGNTEWDKWTTIMSSDALDMEDPDNVAAMSSGRGAKLTRPRPGHADYAGMLKYGFDDARNVLERSSARETAARVAAATVARSFLRETLGVEVLSHVISIGASEPYVGAEPTFADIQAIDDSPVRAFGKDAEKSMIAEIEAAKKAGDTLGGIVEVIVEGLPIGLGSHISGEDRLDAQIAAALMGIQAIKGVEIGDGFEEARRRGSEAHDEVFLDDNGVYRNTNRAGGLEGGMTNGETLRVRAGMKPISTVPRALKTIDMENGKAATGIHQRSDVCAVPAAGVVAEAMVTLVLARAVLQKFGGDSLSETKSNIDTYLKNIEERMKFEGLEDGA</sequence>
<feature type="chain" id="PRO_0000322398" description="Chorismate synthase">
    <location>
        <begin position="1"/>
        <end position="407"/>
    </location>
</feature>
<feature type="binding site" evidence="1">
    <location>
        <position position="40"/>
    </location>
    <ligand>
        <name>NADP(+)</name>
        <dbReference type="ChEBI" id="CHEBI:58349"/>
    </ligand>
</feature>
<feature type="binding site" evidence="1">
    <location>
        <position position="46"/>
    </location>
    <ligand>
        <name>NADP(+)</name>
        <dbReference type="ChEBI" id="CHEBI:58349"/>
    </ligand>
</feature>
<feature type="binding site" evidence="1">
    <location>
        <begin position="140"/>
        <end position="142"/>
    </location>
    <ligand>
        <name>FMN</name>
        <dbReference type="ChEBI" id="CHEBI:58210"/>
    </ligand>
</feature>
<feature type="binding site" evidence="1">
    <location>
        <begin position="261"/>
        <end position="262"/>
    </location>
    <ligand>
        <name>FMN</name>
        <dbReference type="ChEBI" id="CHEBI:58210"/>
    </ligand>
</feature>
<feature type="binding site" evidence="1">
    <location>
        <position position="305"/>
    </location>
    <ligand>
        <name>FMN</name>
        <dbReference type="ChEBI" id="CHEBI:58210"/>
    </ligand>
</feature>
<feature type="binding site" evidence="1">
    <location>
        <begin position="320"/>
        <end position="324"/>
    </location>
    <ligand>
        <name>FMN</name>
        <dbReference type="ChEBI" id="CHEBI:58210"/>
    </ligand>
</feature>
<feature type="binding site" evidence="1">
    <location>
        <position position="346"/>
    </location>
    <ligand>
        <name>FMN</name>
        <dbReference type="ChEBI" id="CHEBI:58210"/>
    </ligand>
</feature>
<proteinExistence type="inferred from homology"/>
<name>AROC_CORGB</name>
<dbReference type="EC" id="4.2.3.5" evidence="1"/>
<dbReference type="EMBL" id="AP009044">
    <property type="protein sequence ID" value="BAF54664.1"/>
    <property type="status" value="ALT_INIT"/>
    <property type="molecule type" value="Genomic_DNA"/>
</dbReference>
<dbReference type="RefSeq" id="WP_173328330.1">
    <property type="nucleotide sequence ID" value="NC_009342.1"/>
</dbReference>
<dbReference type="SMR" id="A4QEJ8"/>
<dbReference type="KEGG" id="cgt:cgR_1672"/>
<dbReference type="HOGENOM" id="CLU_034547_2_0_11"/>
<dbReference type="PhylomeDB" id="A4QEJ8"/>
<dbReference type="UniPathway" id="UPA00053">
    <property type="reaction ID" value="UER00090"/>
</dbReference>
<dbReference type="Proteomes" id="UP000006698">
    <property type="component" value="Chromosome"/>
</dbReference>
<dbReference type="GO" id="GO:0005829">
    <property type="term" value="C:cytosol"/>
    <property type="evidence" value="ECO:0007669"/>
    <property type="project" value="TreeGrafter"/>
</dbReference>
<dbReference type="GO" id="GO:0004107">
    <property type="term" value="F:chorismate synthase activity"/>
    <property type="evidence" value="ECO:0007669"/>
    <property type="project" value="UniProtKB-UniRule"/>
</dbReference>
<dbReference type="GO" id="GO:0010181">
    <property type="term" value="F:FMN binding"/>
    <property type="evidence" value="ECO:0007669"/>
    <property type="project" value="TreeGrafter"/>
</dbReference>
<dbReference type="GO" id="GO:0008652">
    <property type="term" value="P:amino acid biosynthetic process"/>
    <property type="evidence" value="ECO:0007669"/>
    <property type="project" value="UniProtKB-KW"/>
</dbReference>
<dbReference type="GO" id="GO:0009073">
    <property type="term" value="P:aromatic amino acid family biosynthetic process"/>
    <property type="evidence" value="ECO:0007669"/>
    <property type="project" value="UniProtKB-KW"/>
</dbReference>
<dbReference type="GO" id="GO:0009423">
    <property type="term" value="P:chorismate biosynthetic process"/>
    <property type="evidence" value="ECO:0007669"/>
    <property type="project" value="UniProtKB-UniRule"/>
</dbReference>
<dbReference type="CDD" id="cd07304">
    <property type="entry name" value="Chorismate_synthase"/>
    <property type="match status" value="1"/>
</dbReference>
<dbReference type="FunFam" id="3.60.150.10:FF:000002">
    <property type="entry name" value="Chorismate synthase"/>
    <property type="match status" value="1"/>
</dbReference>
<dbReference type="Gene3D" id="3.60.150.10">
    <property type="entry name" value="Chorismate synthase AroC"/>
    <property type="match status" value="1"/>
</dbReference>
<dbReference type="HAMAP" id="MF_00300">
    <property type="entry name" value="Chorismate_synth"/>
    <property type="match status" value="1"/>
</dbReference>
<dbReference type="InterPro" id="IPR000453">
    <property type="entry name" value="Chorismate_synth"/>
</dbReference>
<dbReference type="InterPro" id="IPR035904">
    <property type="entry name" value="Chorismate_synth_AroC_sf"/>
</dbReference>
<dbReference type="InterPro" id="IPR020541">
    <property type="entry name" value="Chorismate_synthase_CS"/>
</dbReference>
<dbReference type="NCBIfam" id="TIGR00033">
    <property type="entry name" value="aroC"/>
    <property type="match status" value="1"/>
</dbReference>
<dbReference type="NCBIfam" id="NF003793">
    <property type="entry name" value="PRK05382.1"/>
    <property type="match status" value="1"/>
</dbReference>
<dbReference type="PANTHER" id="PTHR21085">
    <property type="entry name" value="CHORISMATE SYNTHASE"/>
    <property type="match status" value="1"/>
</dbReference>
<dbReference type="PANTHER" id="PTHR21085:SF0">
    <property type="entry name" value="CHORISMATE SYNTHASE"/>
    <property type="match status" value="1"/>
</dbReference>
<dbReference type="Pfam" id="PF01264">
    <property type="entry name" value="Chorismate_synt"/>
    <property type="match status" value="1"/>
</dbReference>
<dbReference type="PIRSF" id="PIRSF001456">
    <property type="entry name" value="Chorismate_synth"/>
    <property type="match status" value="1"/>
</dbReference>
<dbReference type="SUPFAM" id="SSF103263">
    <property type="entry name" value="Chorismate synthase, AroC"/>
    <property type="match status" value="1"/>
</dbReference>
<dbReference type="PROSITE" id="PS00787">
    <property type="entry name" value="CHORISMATE_SYNTHASE_1"/>
    <property type="match status" value="1"/>
</dbReference>
<dbReference type="PROSITE" id="PS00788">
    <property type="entry name" value="CHORISMATE_SYNTHASE_2"/>
    <property type="match status" value="1"/>
</dbReference>
<dbReference type="PROSITE" id="PS00789">
    <property type="entry name" value="CHORISMATE_SYNTHASE_3"/>
    <property type="match status" value="1"/>
</dbReference>
<evidence type="ECO:0000255" key="1">
    <source>
        <dbReference type="HAMAP-Rule" id="MF_00300"/>
    </source>
</evidence>
<evidence type="ECO:0000305" key="2"/>
<protein>
    <recommendedName>
        <fullName evidence="1">Chorismate synthase</fullName>
        <shortName evidence="1">CS</shortName>
        <ecNumber evidence="1">4.2.3.5</ecNumber>
    </recommendedName>
    <alternativeName>
        <fullName evidence="1">5-enolpyruvylshikimate-3-phosphate phospholyase</fullName>
    </alternativeName>
</protein>
<reference key="1">
    <citation type="journal article" date="2007" name="Microbiology">
        <title>Comparative analysis of the Corynebacterium glutamicum group and complete genome sequence of strain R.</title>
        <authorList>
            <person name="Yukawa H."/>
            <person name="Omumasaba C.A."/>
            <person name="Nonaka H."/>
            <person name="Kos P."/>
            <person name="Okai N."/>
            <person name="Suzuki N."/>
            <person name="Suda M."/>
            <person name="Tsuge Y."/>
            <person name="Watanabe J."/>
            <person name="Ikeda Y."/>
            <person name="Vertes A.A."/>
            <person name="Inui M."/>
        </authorList>
    </citation>
    <scope>NUCLEOTIDE SEQUENCE [LARGE SCALE GENOMIC DNA]</scope>
    <source>
        <strain>R</strain>
    </source>
</reference>
<keyword id="KW-0028">Amino-acid biosynthesis</keyword>
<keyword id="KW-0057">Aromatic amino acid biosynthesis</keyword>
<keyword id="KW-0274">FAD</keyword>
<keyword id="KW-0285">Flavoprotein</keyword>
<keyword id="KW-0288">FMN</keyword>
<keyword id="KW-0456">Lyase</keyword>
<keyword id="KW-0521">NADP</keyword>
<comment type="function">
    <text evidence="1">Catalyzes the anti-1,4-elimination of the C-3 phosphate and the C-6 proR hydrogen from 5-enolpyruvylshikimate-3-phosphate (EPSP) to yield chorismate, which is the branch point compound that serves as the starting substrate for the three terminal pathways of aromatic amino acid biosynthesis. This reaction introduces a second double bond into the aromatic ring system.</text>
</comment>
<comment type="catalytic activity">
    <reaction evidence="1">
        <text>5-O-(1-carboxyvinyl)-3-phosphoshikimate = chorismate + phosphate</text>
        <dbReference type="Rhea" id="RHEA:21020"/>
        <dbReference type="ChEBI" id="CHEBI:29748"/>
        <dbReference type="ChEBI" id="CHEBI:43474"/>
        <dbReference type="ChEBI" id="CHEBI:57701"/>
        <dbReference type="EC" id="4.2.3.5"/>
    </reaction>
</comment>
<comment type="cofactor">
    <cofactor evidence="1">
        <name>FMNH2</name>
        <dbReference type="ChEBI" id="CHEBI:57618"/>
    </cofactor>
    <text evidence="1">Reduced FMN (FMNH(2)).</text>
</comment>
<comment type="pathway">
    <text evidence="1">Metabolic intermediate biosynthesis; chorismate biosynthesis; chorismate from D-erythrose 4-phosphate and phosphoenolpyruvate: step 7/7.</text>
</comment>
<comment type="subunit">
    <text evidence="1">Homotetramer.</text>
</comment>
<comment type="similarity">
    <text evidence="1">Belongs to the chorismate synthase family.</text>
</comment>
<comment type="sequence caution" evidence="2">
    <conflict type="erroneous initiation">
        <sequence resource="EMBL-CDS" id="BAF54664"/>
    </conflict>
    <text>Extended N-terminus.</text>
</comment>
<organism>
    <name type="scientific">Corynebacterium glutamicum (strain R)</name>
    <dbReference type="NCBI Taxonomy" id="340322"/>
    <lineage>
        <taxon>Bacteria</taxon>
        <taxon>Bacillati</taxon>
        <taxon>Actinomycetota</taxon>
        <taxon>Actinomycetes</taxon>
        <taxon>Mycobacteriales</taxon>
        <taxon>Corynebacteriaceae</taxon>
        <taxon>Corynebacterium</taxon>
    </lineage>
</organism>
<accession>A4QEJ8</accession>